<dbReference type="EMBL" id="CR932080">
    <property type="protein sequence ID" value="CAI38920.1"/>
    <property type="molecule type" value="Genomic_DNA"/>
</dbReference>
<dbReference type="EMBL" id="CT868673">
    <property type="protein sequence ID" value="CAK93727.1"/>
    <property type="molecule type" value="Genomic_DNA"/>
</dbReference>
<dbReference type="EMBL" id="U35396">
    <property type="protein sequence ID" value="AAC47157.1"/>
    <property type="molecule type" value="Genomic_DNA"/>
</dbReference>
<dbReference type="PIR" id="S71319">
    <property type="entry name" value="S71319"/>
</dbReference>
<dbReference type="RefSeq" id="XP_001461109.1">
    <property type="nucleotide sequence ID" value="XM_001461072.1"/>
</dbReference>
<dbReference type="SMR" id="Q27178"/>
<dbReference type="STRING" id="5888.Q27178"/>
<dbReference type="EnsemblProtists" id="CAK93727">
    <property type="protein sequence ID" value="CAK93727"/>
    <property type="gene ID" value="GSPATT00026058001"/>
</dbReference>
<dbReference type="GeneID" id="5046894"/>
<dbReference type="KEGG" id="ptm:GSPATT00026058001"/>
<dbReference type="eggNOG" id="KOG0028">
    <property type="taxonomic scope" value="Eukaryota"/>
</dbReference>
<dbReference type="HOGENOM" id="CLU_061288_18_2_1"/>
<dbReference type="InParanoid" id="Q27178"/>
<dbReference type="OMA" id="GEQMDDS"/>
<dbReference type="OrthoDB" id="410571at2759"/>
<dbReference type="Proteomes" id="UP000000600">
    <property type="component" value="Partially assembled WGS sequence"/>
</dbReference>
<dbReference type="GO" id="GO:0005737">
    <property type="term" value="C:cytoplasm"/>
    <property type="evidence" value="ECO:0007669"/>
    <property type="project" value="UniProtKB-KW"/>
</dbReference>
<dbReference type="GO" id="GO:0005856">
    <property type="term" value="C:cytoskeleton"/>
    <property type="evidence" value="ECO:0007669"/>
    <property type="project" value="UniProtKB-SubCell"/>
</dbReference>
<dbReference type="GO" id="GO:0005509">
    <property type="term" value="F:calcium ion binding"/>
    <property type="evidence" value="ECO:0007669"/>
    <property type="project" value="InterPro"/>
</dbReference>
<dbReference type="CDD" id="cd00051">
    <property type="entry name" value="EFh"/>
    <property type="match status" value="1"/>
</dbReference>
<dbReference type="FunFam" id="1.10.238.10:FF:000178">
    <property type="entry name" value="Calmodulin-2 A"/>
    <property type="match status" value="1"/>
</dbReference>
<dbReference type="Gene3D" id="1.10.238.10">
    <property type="entry name" value="EF-hand"/>
    <property type="match status" value="3"/>
</dbReference>
<dbReference type="InterPro" id="IPR050230">
    <property type="entry name" value="CALM/Myosin/TropC-like"/>
</dbReference>
<dbReference type="InterPro" id="IPR011992">
    <property type="entry name" value="EF-hand-dom_pair"/>
</dbReference>
<dbReference type="InterPro" id="IPR018247">
    <property type="entry name" value="EF_Hand_1_Ca_BS"/>
</dbReference>
<dbReference type="InterPro" id="IPR002048">
    <property type="entry name" value="EF_hand_dom"/>
</dbReference>
<dbReference type="PANTHER" id="PTHR23048:SF59">
    <property type="entry name" value="EF-HAND SUPERFAMILY PROTEIN"/>
    <property type="match status" value="1"/>
</dbReference>
<dbReference type="PANTHER" id="PTHR23048">
    <property type="entry name" value="MYOSIN LIGHT CHAIN 1, 3"/>
    <property type="match status" value="1"/>
</dbReference>
<dbReference type="Pfam" id="PF13499">
    <property type="entry name" value="EF-hand_7"/>
    <property type="match status" value="2"/>
</dbReference>
<dbReference type="SMART" id="SM00054">
    <property type="entry name" value="EFh"/>
    <property type="match status" value="4"/>
</dbReference>
<dbReference type="SUPFAM" id="SSF47473">
    <property type="entry name" value="EF-hand"/>
    <property type="match status" value="1"/>
</dbReference>
<dbReference type="PROSITE" id="PS00018">
    <property type="entry name" value="EF_HAND_1"/>
    <property type="match status" value="2"/>
</dbReference>
<dbReference type="PROSITE" id="PS50222">
    <property type="entry name" value="EF_HAND_2"/>
    <property type="match status" value="4"/>
</dbReference>
<protein>
    <recommendedName>
        <fullName>Caltractin ICL1c</fullName>
    </recommendedName>
    <alternativeName>
        <fullName>Centrin-3</fullName>
    </alternativeName>
</protein>
<comment type="function">
    <text>Plays a fundamental role in microtubule organizing center structure and function. Component of the infraciliary lattice (ICL) and the ciliary basal bodies.</text>
</comment>
<comment type="subunit">
    <text evidence="1">Monomer.</text>
</comment>
<comment type="subcellular location">
    <subcellularLocation>
        <location>Cytoplasm</location>
        <location>Cytoskeleton</location>
    </subcellularLocation>
    <text>ICL, innermost fibrous network of the cortical cytoskeleton.</text>
</comment>
<comment type="similarity">
    <text evidence="4">Belongs to the centrin family.</text>
</comment>
<sequence>MARRGQQPPPQQQQAPPTQKNQAGKFNPAEFVKPGLTEEEVLEIKEAFDLFDTDGTQSIDPKELKAAMTSLGFEAKNQTIYQMISDLDTDGSGQIDFAEFLKLMTARISERDSKADIQKVFNLFDSERAGVITLKDLRKVAKELGETMDDSELQEMIDRADSDGDAQVTFEDFYNIMTKKTFA</sequence>
<reference key="1">
    <citation type="submission" date="2005-09" db="EMBL/GenBank/DDBJ databases">
        <title>Paramecium tetraurelia centrin-related protein genes.</title>
        <authorList>
            <person name="Klotz C."/>
        </authorList>
    </citation>
    <scope>NUCLEOTIDE SEQUENCE [GENOMIC DNA]</scope>
    <source>
        <strain>Stock d4-2</strain>
    </source>
</reference>
<reference key="2">
    <citation type="journal article" date="2006" name="Nature">
        <title>Global trends of whole-genome duplications revealed by the ciliate Paramecium tetraurelia.</title>
        <authorList>
            <person name="Aury J.-M."/>
            <person name="Jaillon O."/>
            <person name="Duret L."/>
            <person name="Noel B."/>
            <person name="Jubin C."/>
            <person name="Porcel B.M."/>
            <person name="Segurens B."/>
            <person name="Daubin V."/>
            <person name="Anthouard V."/>
            <person name="Aiach N."/>
            <person name="Arnaiz O."/>
            <person name="Billaut A."/>
            <person name="Beisson J."/>
            <person name="Blanc I."/>
            <person name="Bouhouche K."/>
            <person name="Camara F."/>
            <person name="Duharcourt S."/>
            <person name="Guigo R."/>
            <person name="Gogendeau D."/>
            <person name="Katinka M."/>
            <person name="Keller A.-M."/>
            <person name="Kissmehl R."/>
            <person name="Klotz C."/>
            <person name="Koll F."/>
            <person name="Le Mouel A."/>
            <person name="Lepere G."/>
            <person name="Malinsky S."/>
            <person name="Nowacki M."/>
            <person name="Nowak J.K."/>
            <person name="Plattner H."/>
            <person name="Poulain J."/>
            <person name="Ruiz F."/>
            <person name="Serrano V."/>
            <person name="Zagulski M."/>
            <person name="Dessen P."/>
            <person name="Betermier M."/>
            <person name="Weissenbach J."/>
            <person name="Scarpelli C."/>
            <person name="Schaechter V."/>
            <person name="Sperling L."/>
            <person name="Meyer E."/>
            <person name="Cohen J."/>
            <person name="Wincker P."/>
        </authorList>
    </citation>
    <scope>NUCLEOTIDE SEQUENCE [LARGE SCALE GENOMIC DNA]</scope>
    <source>
        <strain>Stock d4-2</strain>
    </source>
</reference>
<reference key="3">
    <citation type="journal article" date="1996" name="Eur. J. Biochem.">
        <title>Characterization of centrin genes in Paramecium.</title>
        <authorList>
            <person name="Madeddu L."/>
            <person name="Klotz C."/>
            <person name="Le Caer J.-P."/>
            <person name="Beisson J."/>
        </authorList>
    </citation>
    <scope>NUCLEOTIDE SEQUENCE [GENOMIC DNA] OF 2-183</scope>
    <source>
        <strain>Stock d4-2</strain>
    </source>
</reference>
<gene>
    <name type="primary">Icl1c</name>
    <name type="ORF">GSPATT00026058001</name>
</gene>
<keyword id="KW-0106">Calcium</keyword>
<keyword id="KW-0963">Cytoplasm</keyword>
<keyword id="KW-0206">Cytoskeleton</keyword>
<keyword id="KW-0479">Metal-binding</keyword>
<keyword id="KW-1185">Reference proteome</keyword>
<keyword id="KW-0677">Repeat</keyword>
<proteinExistence type="inferred from homology"/>
<organism>
    <name type="scientific">Paramecium tetraurelia</name>
    <dbReference type="NCBI Taxonomy" id="5888"/>
    <lineage>
        <taxon>Eukaryota</taxon>
        <taxon>Sar</taxon>
        <taxon>Alveolata</taxon>
        <taxon>Ciliophora</taxon>
        <taxon>Intramacronucleata</taxon>
        <taxon>Oligohymenophorea</taxon>
        <taxon>Peniculida</taxon>
        <taxon>Parameciidae</taxon>
        <taxon>Paramecium</taxon>
    </lineage>
</organism>
<evidence type="ECO:0000250" key="1"/>
<evidence type="ECO:0000255" key="2">
    <source>
        <dbReference type="PROSITE-ProRule" id="PRU00448"/>
    </source>
</evidence>
<evidence type="ECO:0000256" key="3">
    <source>
        <dbReference type="SAM" id="MobiDB-lite"/>
    </source>
</evidence>
<evidence type="ECO:0000305" key="4"/>
<feature type="chain" id="PRO_0000073569" description="Caltractin ICL1c">
    <location>
        <begin position="1"/>
        <end position="183"/>
    </location>
</feature>
<feature type="domain" description="EF-hand 1" evidence="2">
    <location>
        <begin position="39"/>
        <end position="74"/>
    </location>
</feature>
<feature type="domain" description="EF-hand 2" evidence="2">
    <location>
        <begin position="75"/>
        <end position="110"/>
    </location>
</feature>
<feature type="domain" description="EF-hand 3" evidence="2">
    <location>
        <begin position="112"/>
        <end position="147"/>
    </location>
</feature>
<feature type="domain" description="EF-hand 4" evidence="2">
    <location>
        <begin position="148"/>
        <end position="183"/>
    </location>
</feature>
<feature type="region of interest" description="Disordered" evidence="3">
    <location>
        <begin position="1"/>
        <end position="30"/>
    </location>
</feature>
<feature type="binding site" evidence="2">
    <location>
        <position position="52"/>
    </location>
    <ligand>
        <name>Ca(2+)</name>
        <dbReference type="ChEBI" id="CHEBI:29108"/>
        <label>1</label>
    </ligand>
</feature>
<feature type="binding site" evidence="2">
    <location>
        <position position="54"/>
    </location>
    <ligand>
        <name>Ca(2+)</name>
        <dbReference type="ChEBI" id="CHEBI:29108"/>
        <label>1</label>
    </ligand>
</feature>
<feature type="binding site" evidence="2">
    <location>
        <position position="56"/>
    </location>
    <ligand>
        <name>Ca(2+)</name>
        <dbReference type="ChEBI" id="CHEBI:29108"/>
        <label>1</label>
    </ligand>
</feature>
<feature type="binding site" evidence="2">
    <location>
        <position position="58"/>
    </location>
    <ligand>
        <name>Ca(2+)</name>
        <dbReference type="ChEBI" id="CHEBI:29108"/>
        <label>1</label>
    </ligand>
</feature>
<feature type="binding site" evidence="2">
    <location>
        <position position="63"/>
    </location>
    <ligand>
        <name>Ca(2+)</name>
        <dbReference type="ChEBI" id="CHEBI:29108"/>
        <label>1</label>
    </ligand>
</feature>
<feature type="binding site" evidence="2">
    <location>
        <position position="88"/>
    </location>
    <ligand>
        <name>Ca(2+)</name>
        <dbReference type="ChEBI" id="CHEBI:29108"/>
        <label>2</label>
    </ligand>
</feature>
<feature type="binding site" evidence="2">
    <location>
        <position position="90"/>
    </location>
    <ligand>
        <name>Ca(2+)</name>
        <dbReference type="ChEBI" id="CHEBI:29108"/>
        <label>2</label>
    </ligand>
</feature>
<feature type="binding site" evidence="2">
    <location>
        <position position="92"/>
    </location>
    <ligand>
        <name>Ca(2+)</name>
        <dbReference type="ChEBI" id="CHEBI:29108"/>
        <label>2</label>
    </ligand>
</feature>
<feature type="binding site" evidence="2">
    <location>
        <position position="94"/>
    </location>
    <ligand>
        <name>Ca(2+)</name>
        <dbReference type="ChEBI" id="CHEBI:29108"/>
        <label>2</label>
    </ligand>
</feature>
<feature type="binding site" evidence="2">
    <location>
        <position position="99"/>
    </location>
    <ligand>
        <name>Ca(2+)</name>
        <dbReference type="ChEBI" id="CHEBI:29108"/>
        <label>2</label>
    </ligand>
</feature>
<accession>Q27178</accession>
<accession>Q3SEK4</accession>
<name>CATR3_PARTE</name>